<protein>
    <recommendedName>
        <fullName evidence="1">Leucine--tRNA ligase</fullName>
        <ecNumber evidence="1">6.1.1.4</ecNumber>
    </recommendedName>
    <alternativeName>
        <fullName evidence="1">Leucyl-tRNA synthetase</fullName>
        <shortName evidence="1">LeuRS</shortName>
    </alternativeName>
</protein>
<feature type="chain" id="PRO_1000009367" description="Leucine--tRNA ligase">
    <location>
        <begin position="1"/>
        <end position="803"/>
    </location>
</feature>
<feature type="short sequence motif" description="'HIGH' region">
    <location>
        <begin position="40"/>
        <end position="51"/>
    </location>
</feature>
<feature type="short sequence motif" description="'KMSKS' region">
    <location>
        <begin position="575"/>
        <end position="579"/>
    </location>
</feature>
<feature type="binding site" evidence="1">
    <location>
        <position position="578"/>
    </location>
    <ligand>
        <name>ATP</name>
        <dbReference type="ChEBI" id="CHEBI:30616"/>
    </ligand>
</feature>
<dbReference type="EC" id="6.1.1.4" evidence="1"/>
<dbReference type="EMBL" id="AM263198">
    <property type="protein sequence ID" value="CAK21097.1"/>
    <property type="molecule type" value="Genomic_DNA"/>
</dbReference>
<dbReference type="RefSeq" id="WP_011702461.1">
    <property type="nucleotide sequence ID" value="NC_008555.1"/>
</dbReference>
<dbReference type="SMR" id="A0AJB5"/>
<dbReference type="STRING" id="386043.lwe1679"/>
<dbReference type="GeneID" id="61189555"/>
<dbReference type="KEGG" id="lwe:lwe1679"/>
<dbReference type="eggNOG" id="COG0495">
    <property type="taxonomic scope" value="Bacteria"/>
</dbReference>
<dbReference type="HOGENOM" id="CLU_004427_0_0_9"/>
<dbReference type="OrthoDB" id="9810365at2"/>
<dbReference type="Proteomes" id="UP000000779">
    <property type="component" value="Chromosome"/>
</dbReference>
<dbReference type="GO" id="GO:0005829">
    <property type="term" value="C:cytosol"/>
    <property type="evidence" value="ECO:0007669"/>
    <property type="project" value="TreeGrafter"/>
</dbReference>
<dbReference type="GO" id="GO:0002161">
    <property type="term" value="F:aminoacyl-tRNA deacylase activity"/>
    <property type="evidence" value="ECO:0007669"/>
    <property type="project" value="InterPro"/>
</dbReference>
<dbReference type="GO" id="GO:0005524">
    <property type="term" value="F:ATP binding"/>
    <property type="evidence" value="ECO:0007669"/>
    <property type="project" value="UniProtKB-UniRule"/>
</dbReference>
<dbReference type="GO" id="GO:0004823">
    <property type="term" value="F:leucine-tRNA ligase activity"/>
    <property type="evidence" value="ECO:0007669"/>
    <property type="project" value="UniProtKB-UniRule"/>
</dbReference>
<dbReference type="GO" id="GO:0006429">
    <property type="term" value="P:leucyl-tRNA aminoacylation"/>
    <property type="evidence" value="ECO:0007669"/>
    <property type="project" value="UniProtKB-UniRule"/>
</dbReference>
<dbReference type="CDD" id="cd07958">
    <property type="entry name" value="Anticodon_Ia_Leu_BEm"/>
    <property type="match status" value="1"/>
</dbReference>
<dbReference type="CDD" id="cd00812">
    <property type="entry name" value="LeuRS_core"/>
    <property type="match status" value="1"/>
</dbReference>
<dbReference type="FunFam" id="1.10.730.10:FF:000018">
    <property type="entry name" value="Leucine--tRNA ligase"/>
    <property type="match status" value="1"/>
</dbReference>
<dbReference type="FunFam" id="3.10.20.590:FF:000001">
    <property type="entry name" value="Leucine--tRNA ligase"/>
    <property type="match status" value="1"/>
</dbReference>
<dbReference type="FunFam" id="3.40.50.620:FF:000056">
    <property type="entry name" value="Leucine--tRNA ligase"/>
    <property type="match status" value="1"/>
</dbReference>
<dbReference type="FunFam" id="3.40.50.620:FF:000077">
    <property type="entry name" value="Leucine--tRNA ligase"/>
    <property type="match status" value="1"/>
</dbReference>
<dbReference type="Gene3D" id="3.10.20.590">
    <property type="match status" value="1"/>
</dbReference>
<dbReference type="Gene3D" id="3.40.50.620">
    <property type="entry name" value="HUPs"/>
    <property type="match status" value="2"/>
</dbReference>
<dbReference type="Gene3D" id="1.10.730.10">
    <property type="entry name" value="Isoleucyl-tRNA Synthetase, Domain 1"/>
    <property type="match status" value="1"/>
</dbReference>
<dbReference type="HAMAP" id="MF_00049_B">
    <property type="entry name" value="Leu_tRNA_synth_B"/>
    <property type="match status" value="1"/>
</dbReference>
<dbReference type="InterPro" id="IPR001412">
    <property type="entry name" value="aa-tRNA-synth_I_CS"/>
</dbReference>
<dbReference type="InterPro" id="IPR002300">
    <property type="entry name" value="aa-tRNA-synth_Ia"/>
</dbReference>
<dbReference type="InterPro" id="IPR002302">
    <property type="entry name" value="Leu-tRNA-ligase"/>
</dbReference>
<dbReference type="InterPro" id="IPR025709">
    <property type="entry name" value="Leu_tRNA-synth_edit"/>
</dbReference>
<dbReference type="InterPro" id="IPR013155">
    <property type="entry name" value="M/V/L/I-tRNA-synth_anticd-bd"/>
</dbReference>
<dbReference type="InterPro" id="IPR015413">
    <property type="entry name" value="Methionyl/Leucyl_tRNA_Synth"/>
</dbReference>
<dbReference type="InterPro" id="IPR014729">
    <property type="entry name" value="Rossmann-like_a/b/a_fold"/>
</dbReference>
<dbReference type="InterPro" id="IPR009080">
    <property type="entry name" value="tRNAsynth_Ia_anticodon-bd"/>
</dbReference>
<dbReference type="InterPro" id="IPR009008">
    <property type="entry name" value="Val/Leu/Ile-tRNA-synth_edit"/>
</dbReference>
<dbReference type="NCBIfam" id="TIGR00396">
    <property type="entry name" value="leuS_bact"/>
    <property type="match status" value="1"/>
</dbReference>
<dbReference type="PANTHER" id="PTHR43740:SF2">
    <property type="entry name" value="LEUCINE--TRNA LIGASE, MITOCHONDRIAL"/>
    <property type="match status" value="1"/>
</dbReference>
<dbReference type="PANTHER" id="PTHR43740">
    <property type="entry name" value="LEUCYL-TRNA SYNTHETASE"/>
    <property type="match status" value="1"/>
</dbReference>
<dbReference type="Pfam" id="PF08264">
    <property type="entry name" value="Anticodon_1"/>
    <property type="match status" value="1"/>
</dbReference>
<dbReference type="Pfam" id="PF00133">
    <property type="entry name" value="tRNA-synt_1"/>
    <property type="match status" value="1"/>
</dbReference>
<dbReference type="Pfam" id="PF13603">
    <property type="entry name" value="tRNA-synt_1_2"/>
    <property type="match status" value="1"/>
</dbReference>
<dbReference type="Pfam" id="PF09334">
    <property type="entry name" value="tRNA-synt_1g"/>
    <property type="match status" value="1"/>
</dbReference>
<dbReference type="PRINTS" id="PR00985">
    <property type="entry name" value="TRNASYNTHLEU"/>
</dbReference>
<dbReference type="SUPFAM" id="SSF47323">
    <property type="entry name" value="Anticodon-binding domain of a subclass of class I aminoacyl-tRNA synthetases"/>
    <property type="match status" value="1"/>
</dbReference>
<dbReference type="SUPFAM" id="SSF52374">
    <property type="entry name" value="Nucleotidylyl transferase"/>
    <property type="match status" value="1"/>
</dbReference>
<dbReference type="SUPFAM" id="SSF50677">
    <property type="entry name" value="ValRS/IleRS/LeuRS editing domain"/>
    <property type="match status" value="1"/>
</dbReference>
<dbReference type="PROSITE" id="PS00178">
    <property type="entry name" value="AA_TRNA_LIGASE_I"/>
    <property type="match status" value="1"/>
</dbReference>
<name>SYL_LISW6</name>
<accession>A0AJB5</accession>
<sequence length="803" mass="92069">MTFNHKKMEPKWQQYWSEHNTFKTTEDKDKENFYALDMFPYPSGAGLHVGHPEGYTATDILSRMKRMQGKNVLHPIGWDAFGLPAEQYAIDTGNDPEEFTALNIANFTRQIKSLGFSYDWDREINTTDPEYYKWTQWIFEKLYENGLAYEAEIAVNWCPALGTVLANEEVIDGKSERGGFPVFRKPMRQWMLKITAYADRLLDDLDLVDWPENIKDMQRNWIGRSEGAEVTFKIKDSDETFNVFTTRPDTLFGATYTVFAPEHELIEKITTPEQKEAVETYKKQVELKSELERTDLAKDKTGVFTGAYAINPINGEEVPIWIADYVLIQYGTGAIMAVPAHDERDFEFAQQFGLNIRPVLEGGDVTKEAFTGDGPHINSEFLDGLAKEEAITAAIDWLEKEGIGSRKITYRLRDWLFSRQRYWGEPIPVIHWEDGETTLVPEEELPLLLPKATEIKPSGTGESPLANLHDWVNVTDESGRKGRRETNTMPQWAGSSWYFLRYIDPKNTEAIADKEKLIEWLPVDVYIGGAEHAVLHLLYARFWHKFLYDIGVVPTKEPFQKLFNQGMILGENNEKMSKSRGNVVNPDEVVEKYGADTLRMYEMFMGPLDASIAWNENGLEGARKFLDRIWRLFVTEEGILAEKVTTTANANLEKAYHHMVKTVTNHYENLRFNTGISQLMIFINEAYKQDSIPKEYVEGFVQLLSPIAPHLAEELWEILGHTETISYVTWPTYDETKLVEDEVEIVLQVNGKVKSKITVAKSLGKEELEKIAQEDDKMKENLEGKTIRKVIVVPGKLVNIVGN</sequence>
<reference key="1">
    <citation type="journal article" date="2006" name="J. Bacteriol.">
        <title>Whole-genome sequence of Listeria welshimeri reveals common steps in genome reduction with Listeria innocua as compared to Listeria monocytogenes.</title>
        <authorList>
            <person name="Hain T."/>
            <person name="Steinweg C."/>
            <person name="Kuenne C.T."/>
            <person name="Billion A."/>
            <person name="Ghai R."/>
            <person name="Chatterjee S.S."/>
            <person name="Domann E."/>
            <person name="Kaerst U."/>
            <person name="Goesmann A."/>
            <person name="Bekel T."/>
            <person name="Bartels D."/>
            <person name="Kaiser O."/>
            <person name="Meyer F."/>
            <person name="Puehler A."/>
            <person name="Weisshaar B."/>
            <person name="Wehland J."/>
            <person name="Liang C."/>
            <person name="Dandekar T."/>
            <person name="Lampidis R."/>
            <person name="Kreft J."/>
            <person name="Goebel W."/>
            <person name="Chakraborty T."/>
        </authorList>
    </citation>
    <scope>NUCLEOTIDE SEQUENCE [LARGE SCALE GENOMIC DNA]</scope>
    <source>
        <strain>ATCC 35897 / DSM 20650 / CCUG 15529 / CIP 8149 / NCTC 11857 / SLCC 5334 / V8</strain>
    </source>
</reference>
<keyword id="KW-0030">Aminoacyl-tRNA synthetase</keyword>
<keyword id="KW-0067">ATP-binding</keyword>
<keyword id="KW-0963">Cytoplasm</keyword>
<keyword id="KW-0436">Ligase</keyword>
<keyword id="KW-0547">Nucleotide-binding</keyword>
<keyword id="KW-0648">Protein biosynthesis</keyword>
<organism>
    <name type="scientific">Listeria welshimeri serovar 6b (strain ATCC 35897 / DSM 20650 / CCUG 15529 / CIP 8149 / NCTC 11857 / SLCC 5334 / V8)</name>
    <dbReference type="NCBI Taxonomy" id="386043"/>
    <lineage>
        <taxon>Bacteria</taxon>
        <taxon>Bacillati</taxon>
        <taxon>Bacillota</taxon>
        <taxon>Bacilli</taxon>
        <taxon>Bacillales</taxon>
        <taxon>Listeriaceae</taxon>
        <taxon>Listeria</taxon>
    </lineage>
</organism>
<comment type="catalytic activity">
    <reaction evidence="1">
        <text>tRNA(Leu) + L-leucine + ATP = L-leucyl-tRNA(Leu) + AMP + diphosphate</text>
        <dbReference type="Rhea" id="RHEA:11688"/>
        <dbReference type="Rhea" id="RHEA-COMP:9613"/>
        <dbReference type="Rhea" id="RHEA-COMP:9622"/>
        <dbReference type="ChEBI" id="CHEBI:30616"/>
        <dbReference type="ChEBI" id="CHEBI:33019"/>
        <dbReference type="ChEBI" id="CHEBI:57427"/>
        <dbReference type="ChEBI" id="CHEBI:78442"/>
        <dbReference type="ChEBI" id="CHEBI:78494"/>
        <dbReference type="ChEBI" id="CHEBI:456215"/>
        <dbReference type="EC" id="6.1.1.4"/>
    </reaction>
</comment>
<comment type="subcellular location">
    <subcellularLocation>
        <location evidence="1">Cytoplasm</location>
    </subcellularLocation>
</comment>
<comment type="similarity">
    <text evidence="1">Belongs to the class-I aminoacyl-tRNA synthetase family.</text>
</comment>
<evidence type="ECO:0000255" key="1">
    <source>
        <dbReference type="HAMAP-Rule" id="MF_00049"/>
    </source>
</evidence>
<proteinExistence type="inferred from homology"/>
<gene>
    <name evidence="1" type="primary">leuS</name>
    <name type="ordered locus">lwe1679</name>
</gene>